<reference key="1">
    <citation type="journal article" date="2001" name="Proc. Natl. Acad. Sci. U.S.A.">
        <title>Analysis of the chromosome sequence of the legume symbiont Sinorhizobium meliloti strain 1021.</title>
        <authorList>
            <person name="Capela D."/>
            <person name="Barloy-Hubler F."/>
            <person name="Gouzy J."/>
            <person name="Bothe G."/>
            <person name="Ampe F."/>
            <person name="Batut J."/>
            <person name="Boistard P."/>
            <person name="Becker A."/>
            <person name="Boutry M."/>
            <person name="Cadieu E."/>
            <person name="Dreano S."/>
            <person name="Gloux S."/>
            <person name="Godrie T."/>
            <person name="Goffeau A."/>
            <person name="Kahn D."/>
            <person name="Kiss E."/>
            <person name="Lelaure V."/>
            <person name="Masuy D."/>
            <person name="Pohl T."/>
            <person name="Portetelle D."/>
            <person name="Puehler A."/>
            <person name="Purnelle B."/>
            <person name="Ramsperger U."/>
            <person name="Renard C."/>
            <person name="Thebault P."/>
            <person name="Vandenbol M."/>
            <person name="Weidner S."/>
            <person name="Galibert F."/>
        </authorList>
    </citation>
    <scope>NUCLEOTIDE SEQUENCE [LARGE SCALE GENOMIC DNA]</scope>
    <source>
        <strain>1021</strain>
    </source>
</reference>
<reference key="2">
    <citation type="journal article" date="2001" name="Science">
        <title>The composite genome of the legume symbiont Sinorhizobium meliloti.</title>
        <authorList>
            <person name="Galibert F."/>
            <person name="Finan T.M."/>
            <person name="Long S.R."/>
            <person name="Puehler A."/>
            <person name="Abola P."/>
            <person name="Ampe F."/>
            <person name="Barloy-Hubler F."/>
            <person name="Barnett M.J."/>
            <person name="Becker A."/>
            <person name="Boistard P."/>
            <person name="Bothe G."/>
            <person name="Boutry M."/>
            <person name="Bowser L."/>
            <person name="Buhrmester J."/>
            <person name="Cadieu E."/>
            <person name="Capela D."/>
            <person name="Chain P."/>
            <person name="Cowie A."/>
            <person name="Davis R.W."/>
            <person name="Dreano S."/>
            <person name="Federspiel N.A."/>
            <person name="Fisher R.F."/>
            <person name="Gloux S."/>
            <person name="Godrie T."/>
            <person name="Goffeau A."/>
            <person name="Golding B."/>
            <person name="Gouzy J."/>
            <person name="Gurjal M."/>
            <person name="Hernandez-Lucas I."/>
            <person name="Hong A."/>
            <person name="Huizar L."/>
            <person name="Hyman R.W."/>
            <person name="Jones T."/>
            <person name="Kahn D."/>
            <person name="Kahn M.L."/>
            <person name="Kalman S."/>
            <person name="Keating D.H."/>
            <person name="Kiss E."/>
            <person name="Komp C."/>
            <person name="Lelaure V."/>
            <person name="Masuy D."/>
            <person name="Palm C."/>
            <person name="Peck M.C."/>
            <person name="Pohl T.M."/>
            <person name="Portetelle D."/>
            <person name="Purnelle B."/>
            <person name="Ramsperger U."/>
            <person name="Surzycki R."/>
            <person name="Thebault P."/>
            <person name="Vandenbol M."/>
            <person name="Vorhoelter F.J."/>
            <person name="Weidner S."/>
            <person name="Wells D.H."/>
            <person name="Wong K."/>
            <person name="Yeh K.-C."/>
            <person name="Batut J."/>
        </authorList>
    </citation>
    <scope>NUCLEOTIDE SEQUENCE [LARGE SCALE GENOMIC DNA]</scope>
    <source>
        <strain>1021</strain>
    </source>
</reference>
<keyword id="KW-0378">Hydrolase</keyword>
<keyword id="KW-0479">Metal-binding</keyword>
<keyword id="KW-0546">Nucleotide metabolism</keyword>
<keyword id="KW-1185">Reference proteome</keyword>
<keyword id="KW-0862">Zinc</keyword>
<gene>
    <name type="ordered locus">R00132</name>
    <name type="ORF">SMc04120</name>
</gene>
<accession>Q92T48</accession>
<protein>
    <recommendedName>
        <fullName evidence="1">Adenine deaminase</fullName>
        <shortName evidence="1">ADE</shortName>
        <ecNumber evidence="1">3.5.4.2</ecNumber>
    </recommendedName>
    <alternativeName>
        <fullName evidence="1">Adenine aminohydrolase</fullName>
        <shortName evidence="1">AAH</shortName>
    </alternativeName>
</protein>
<dbReference type="EC" id="3.5.4.2" evidence="1"/>
<dbReference type="EMBL" id="AL591688">
    <property type="protein sequence ID" value="CAC41519.1"/>
    <property type="molecule type" value="Genomic_DNA"/>
</dbReference>
<dbReference type="RefSeq" id="NP_384238.1">
    <property type="nucleotide sequence ID" value="NC_003047.1"/>
</dbReference>
<dbReference type="RefSeq" id="WP_010968374.1">
    <property type="nucleotide sequence ID" value="NC_003047.1"/>
</dbReference>
<dbReference type="SMR" id="Q92T48"/>
<dbReference type="EnsemblBacteria" id="CAC41519">
    <property type="protein sequence ID" value="CAC41519"/>
    <property type="gene ID" value="SMc04120"/>
</dbReference>
<dbReference type="KEGG" id="sme:SMc04120"/>
<dbReference type="PATRIC" id="fig|266834.11.peg.1491"/>
<dbReference type="eggNOG" id="COG1816">
    <property type="taxonomic scope" value="Bacteria"/>
</dbReference>
<dbReference type="HOGENOM" id="CLU_039228_7_1_5"/>
<dbReference type="OrthoDB" id="105475at2"/>
<dbReference type="Proteomes" id="UP000001976">
    <property type="component" value="Chromosome"/>
</dbReference>
<dbReference type="GO" id="GO:0000034">
    <property type="term" value="F:adenine deaminase activity"/>
    <property type="evidence" value="ECO:0007669"/>
    <property type="project" value="UniProtKB-UniRule"/>
</dbReference>
<dbReference type="GO" id="GO:0008270">
    <property type="term" value="F:zinc ion binding"/>
    <property type="evidence" value="ECO:0007669"/>
    <property type="project" value="UniProtKB-UniRule"/>
</dbReference>
<dbReference type="GO" id="GO:0006146">
    <property type="term" value="P:adenine catabolic process"/>
    <property type="evidence" value="ECO:0007669"/>
    <property type="project" value="UniProtKB-UniRule"/>
</dbReference>
<dbReference type="GO" id="GO:0043103">
    <property type="term" value="P:hypoxanthine salvage"/>
    <property type="evidence" value="ECO:0007669"/>
    <property type="project" value="UniProtKB-UniRule"/>
</dbReference>
<dbReference type="GO" id="GO:0009117">
    <property type="term" value="P:nucleotide metabolic process"/>
    <property type="evidence" value="ECO:0007669"/>
    <property type="project" value="UniProtKB-KW"/>
</dbReference>
<dbReference type="CDD" id="cd01320">
    <property type="entry name" value="ADA"/>
    <property type="match status" value="1"/>
</dbReference>
<dbReference type="Gene3D" id="3.20.20.140">
    <property type="entry name" value="Metal-dependent hydrolases"/>
    <property type="match status" value="1"/>
</dbReference>
<dbReference type="HAMAP" id="MF_01962">
    <property type="entry name" value="Adenine_deaminase"/>
    <property type="match status" value="1"/>
</dbReference>
<dbReference type="InterPro" id="IPR001365">
    <property type="entry name" value="A_deaminase_dom"/>
</dbReference>
<dbReference type="InterPro" id="IPR028892">
    <property type="entry name" value="ADE"/>
</dbReference>
<dbReference type="InterPro" id="IPR006330">
    <property type="entry name" value="Ado/ade_deaminase"/>
</dbReference>
<dbReference type="InterPro" id="IPR032466">
    <property type="entry name" value="Metal_Hydrolase"/>
</dbReference>
<dbReference type="NCBIfam" id="TIGR01430">
    <property type="entry name" value="aden_deam"/>
    <property type="match status" value="1"/>
</dbReference>
<dbReference type="NCBIfam" id="NF006848">
    <property type="entry name" value="PRK09358.1-3"/>
    <property type="match status" value="1"/>
</dbReference>
<dbReference type="PANTHER" id="PTHR43114">
    <property type="entry name" value="ADENINE DEAMINASE"/>
    <property type="match status" value="1"/>
</dbReference>
<dbReference type="PANTHER" id="PTHR43114:SF6">
    <property type="entry name" value="ADENINE DEAMINASE"/>
    <property type="match status" value="1"/>
</dbReference>
<dbReference type="Pfam" id="PF00962">
    <property type="entry name" value="A_deaminase"/>
    <property type="match status" value="1"/>
</dbReference>
<dbReference type="SUPFAM" id="SSF51556">
    <property type="entry name" value="Metallo-dependent hydrolases"/>
    <property type="match status" value="1"/>
</dbReference>
<proteinExistence type="inferred from homology"/>
<organism>
    <name type="scientific">Rhizobium meliloti (strain 1021)</name>
    <name type="common">Ensifer meliloti</name>
    <name type="synonym">Sinorhizobium meliloti</name>
    <dbReference type="NCBI Taxonomy" id="266834"/>
    <lineage>
        <taxon>Bacteria</taxon>
        <taxon>Pseudomonadati</taxon>
        <taxon>Pseudomonadota</taxon>
        <taxon>Alphaproteobacteria</taxon>
        <taxon>Hyphomicrobiales</taxon>
        <taxon>Rhizobiaceae</taxon>
        <taxon>Sinorhizobium/Ensifer group</taxon>
        <taxon>Sinorhizobium</taxon>
    </lineage>
</organism>
<comment type="function">
    <text evidence="1">Catalyzes the hydrolytic deamination of adenine to hypoxanthine. Plays an important role in the purine salvage pathway and in nitrogen catabolism.</text>
</comment>
<comment type="catalytic activity">
    <reaction evidence="1">
        <text>adenine + H2O + H(+) = hypoxanthine + NH4(+)</text>
        <dbReference type="Rhea" id="RHEA:23688"/>
        <dbReference type="ChEBI" id="CHEBI:15377"/>
        <dbReference type="ChEBI" id="CHEBI:15378"/>
        <dbReference type="ChEBI" id="CHEBI:16708"/>
        <dbReference type="ChEBI" id="CHEBI:17368"/>
        <dbReference type="ChEBI" id="CHEBI:28938"/>
        <dbReference type="EC" id="3.5.4.2"/>
    </reaction>
</comment>
<comment type="cofactor">
    <cofactor evidence="1">
        <name>Zn(2+)</name>
        <dbReference type="ChEBI" id="CHEBI:29105"/>
    </cofactor>
    <text evidence="1">Binds 1 zinc ion per subunit.</text>
</comment>
<comment type="similarity">
    <text evidence="1">Belongs to the metallo-dependent hydrolases superfamily. Adenosine and AMP deaminases family. Adenine deaminase type 2 subfamily.</text>
</comment>
<evidence type="ECO:0000255" key="1">
    <source>
        <dbReference type="HAMAP-Rule" id="MF_01962"/>
    </source>
</evidence>
<name>ADE_RHIME</name>
<feature type="chain" id="PRO_0000194382" description="Adenine deaminase">
    <location>
        <begin position="1"/>
        <end position="324"/>
    </location>
</feature>
<feature type="active site" description="Proton donor" evidence="1">
    <location>
        <position position="192"/>
    </location>
</feature>
<feature type="binding site" evidence="1">
    <location>
        <position position="11"/>
    </location>
    <ligand>
        <name>Zn(2+)</name>
        <dbReference type="ChEBI" id="CHEBI:29105"/>
        <note>catalytic</note>
    </ligand>
</feature>
<feature type="binding site" evidence="1">
    <location>
        <position position="13"/>
    </location>
    <ligand>
        <name>Zn(2+)</name>
        <dbReference type="ChEBI" id="CHEBI:29105"/>
        <note>catalytic</note>
    </ligand>
</feature>
<feature type="binding site" evidence="1">
    <location>
        <position position="189"/>
    </location>
    <ligand>
        <name>Zn(2+)</name>
        <dbReference type="ChEBI" id="CHEBI:29105"/>
        <note>catalytic</note>
    </ligand>
</feature>
<feature type="binding site" evidence="1">
    <location>
        <position position="270"/>
    </location>
    <ligand>
        <name>Zn(2+)</name>
        <dbReference type="ChEBI" id="CHEBI:29105"/>
        <note>catalytic</note>
    </ligand>
</feature>
<feature type="binding site" evidence="1">
    <location>
        <position position="271"/>
    </location>
    <ligand>
        <name>substrate</name>
    </ligand>
</feature>
<feature type="site" description="Important for catalytic activity" evidence="1">
    <location>
        <position position="213"/>
    </location>
</feature>
<sequence length="324" mass="35478">MTAHLKKAELHCHIEGATPPELALRQARKYGVDTSAIIRDRAYVWEDFTSFVRCYDAVASLFRTEGDYALLAETYLTELAKAGTIYSEIIVSPDHGVTIGLGADAYIEGLAAGMEAARVKTGIESRMLITGIRHLGPDSVIRTAEYAAMRRHPLVTGFNLAGEERMHSVAEFSRAFDIVRDAGLGLTIHAGELSGAFSVRDALDHVRPARISHGVRAIEDGDLVKRLADEGVVLEVCPGSNVALQVFPDFASHPLRRLYEAGVRVTLNSDDPPFFHTSLAQEYEIAFHAMGFSDSEIDRMTKTAIEAAFVDEPTREKLLAALHV</sequence>